<protein>
    <recommendedName>
        <fullName evidence="1">ATP-dependent Clp protease ATP-binding subunit ClpX</fullName>
    </recommendedName>
</protein>
<reference key="1">
    <citation type="journal article" date="2003" name="Proc. Natl. Acad. Sci. U.S.A.">
        <title>The complete genome sequence of the carcinogenic bacterium Helicobacter hepaticus.</title>
        <authorList>
            <person name="Suerbaum S."/>
            <person name="Josenhans C."/>
            <person name="Sterzenbach T."/>
            <person name="Drescher B."/>
            <person name="Brandt P."/>
            <person name="Bell M."/>
            <person name="Droege M."/>
            <person name="Fartmann B."/>
            <person name="Fischer H.-P."/>
            <person name="Ge Z."/>
            <person name="Hoerster A."/>
            <person name="Holland R."/>
            <person name="Klein K."/>
            <person name="Koenig J."/>
            <person name="Macko L."/>
            <person name="Mendz G.L."/>
            <person name="Nyakatura G."/>
            <person name="Schauer D.B."/>
            <person name="Shen Z."/>
            <person name="Weber J."/>
            <person name="Frosch M."/>
            <person name="Fox J.G."/>
        </authorList>
    </citation>
    <scope>NUCLEOTIDE SEQUENCE [LARGE SCALE GENOMIC DNA]</scope>
    <source>
        <strain>ATCC 51449 / 3B1</strain>
    </source>
</reference>
<sequence>MNEIKKRCSFCNKEESLDNPIINSGITPDVYICNYCLIVGSEILTGYLNKNPQQDQEAIDIKTPSPKELKAKLDEYVIGQDEAKRVFSVAVYNHYKRIKANSLSEEEMPNPILQDDVELSKSNILLIGPTGSGKTLMAQTLARFLDIPIAISDATSLTEAGYVGEDVENILTRLLQAADGDVKKAEKGIVFIDEIDKISRLSENRSITRDVSGEGVQQALLKIIEGSVVNIPPKGGRKHPNQEFVQINTSDILFVCGGAFDGLGDIIKRRLGGNVLGFHGEKKGKSEEDALLKYVEPDDLISYGLIPELIGRLHMITTLSPISKEAMVEILTKPKNALIKQYQKIFEIDGATLHFEKDAIESIAELAIARKTGARGLRSIMEGAMIDLMYDLPELAGYEITISKECIMDKQSPLRVKKKRNIQKRA</sequence>
<keyword id="KW-0067">ATP-binding</keyword>
<keyword id="KW-0143">Chaperone</keyword>
<keyword id="KW-0479">Metal-binding</keyword>
<keyword id="KW-0547">Nucleotide-binding</keyword>
<keyword id="KW-1185">Reference proteome</keyword>
<keyword id="KW-0862">Zinc</keyword>
<evidence type="ECO:0000255" key="1">
    <source>
        <dbReference type="HAMAP-Rule" id="MF_00175"/>
    </source>
</evidence>
<evidence type="ECO:0000255" key="2">
    <source>
        <dbReference type="PROSITE-ProRule" id="PRU01250"/>
    </source>
</evidence>
<organism>
    <name type="scientific">Helicobacter hepaticus (strain ATCC 51449 / 3B1)</name>
    <dbReference type="NCBI Taxonomy" id="235279"/>
    <lineage>
        <taxon>Bacteria</taxon>
        <taxon>Pseudomonadati</taxon>
        <taxon>Campylobacterota</taxon>
        <taxon>Epsilonproteobacteria</taxon>
        <taxon>Campylobacterales</taxon>
        <taxon>Helicobacteraceae</taxon>
        <taxon>Helicobacter</taxon>
    </lineage>
</organism>
<proteinExistence type="inferred from homology"/>
<name>CLPX_HELHP</name>
<feature type="chain" id="PRO_0000160364" description="ATP-dependent Clp protease ATP-binding subunit ClpX">
    <location>
        <begin position="1"/>
        <end position="426"/>
    </location>
</feature>
<feature type="domain" description="ClpX-type ZB" evidence="2">
    <location>
        <begin position="1"/>
        <end position="52"/>
    </location>
</feature>
<feature type="binding site" evidence="2">
    <location>
        <position position="8"/>
    </location>
    <ligand>
        <name>Zn(2+)</name>
        <dbReference type="ChEBI" id="CHEBI:29105"/>
    </ligand>
</feature>
<feature type="binding site" evidence="2">
    <location>
        <position position="11"/>
    </location>
    <ligand>
        <name>Zn(2+)</name>
        <dbReference type="ChEBI" id="CHEBI:29105"/>
    </ligand>
</feature>
<feature type="binding site" evidence="2">
    <location>
        <position position="33"/>
    </location>
    <ligand>
        <name>Zn(2+)</name>
        <dbReference type="ChEBI" id="CHEBI:29105"/>
    </ligand>
</feature>
<feature type="binding site" evidence="2">
    <location>
        <position position="36"/>
    </location>
    <ligand>
        <name>Zn(2+)</name>
        <dbReference type="ChEBI" id="CHEBI:29105"/>
    </ligand>
</feature>
<feature type="binding site" evidence="1">
    <location>
        <begin position="129"/>
        <end position="136"/>
    </location>
    <ligand>
        <name>ATP</name>
        <dbReference type="ChEBI" id="CHEBI:30616"/>
    </ligand>
</feature>
<dbReference type="EMBL" id="AE017125">
    <property type="protein sequence ID" value="AAP77780.1"/>
    <property type="molecule type" value="Genomic_DNA"/>
</dbReference>
<dbReference type="RefSeq" id="WP_011116023.1">
    <property type="nucleotide sequence ID" value="NC_004917.1"/>
</dbReference>
<dbReference type="SMR" id="Q7VGY5"/>
<dbReference type="STRING" id="235279.HH_1183"/>
<dbReference type="KEGG" id="hhe:HH_1183"/>
<dbReference type="eggNOG" id="COG1219">
    <property type="taxonomic scope" value="Bacteria"/>
</dbReference>
<dbReference type="HOGENOM" id="CLU_014218_8_2_7"/>
<dbReference type="OrthoDB" id="9804062at2"/>
<dbReference type="Proteomes" id="UP000002495">
    <property type="component" value="Chromosome"/>
</dbReference>
<dbReference type="GO" id="GO:0009376">
    <property type="term" value="C:HslUV protease complex"/>
    <property type="evidence" value="ECO:0007669"/>
    <property type="project" value="TreeGrafter"/>
</dbReference>
<dbReference type="GO" id="GO:0005524">
    <property type="term" value="F:ATP binding"/>
    <property type="evidence" value="ECO:0007669"/>
    <property type="project" value="UniProtKB-UniRule"/>
</dbReference>
<dbReference type="GO" id="GO:0016887">
    <property type="term" value="F:ATP hydrolysis activity"/>
    <property type="evidence" value="ECO:0007669"/>
    <property type="project" value="InterPro"/>
</dbReference>
<dbReference type="GO" id="GO:0140662">
    <property type="term" value="F:ATP-dependent protein folding chaperone"/>
    <property type="evidence" value="ECO:0007669"/>
    <property type="project" value="InterPro"/>
</dbReference>
<dbReference type="GO" id="GO:0046983">
    <property type="term" value="F:protein dimerization activity"/>
    <property type="evidence" value="ECO:0007669"/>
    <property type="project" value="InterPro"/>
</dbReference>
<dbReference type="GO" id="GO:0051082">
    <property type="term" value="F:unfolded protein binding"/>
    <property type="evidence" value="ECO:0007669"/>
    <property type="project" value="UniProtKB-UniRule"/>
</dbReference>
<dbReference type="GO" id="GO:0008270">
    <property type="term" value="F:zinc ion binding"/>
    <property type="evidence" value="ECO:0007669"/>
    <property type="project" value="InterPro"/>
</dbReference>
<dbReference type="GO" id="GO:0051301">
    <property type="term" value="P:cell division"/>
    <property type="evidence" value="ECO:0007669"/>
    <property type="project" value="TreeGrafter"/>
</dbReference>
<dbReference type="GO" id="GO:0051603">
    <property type="term" value="P:proteolysis involved in protein catabolic process"/>
    <property type="evidence" value="ECO:0007669"/>
    <property type="project" value="TreeGrafter"/>
</dbReference>
<dbReference type="CDD" id="cd19497">
    <property type="entry name" value="RecA-like_ClpX"/>
    <property type="match status" value="1"/>
</dbReference>
<dbReference type="FunFam" id="1.10.8.60:FF:000002">
    <property type="entry name" value="ATP-dependent Clp protease ATP-binding subunit ClpX"/>
    <property type="match status" value="1"/>
</dbReference>
<dbReference type="FunFam" id="3.40.50.300:FF:000005">
    <property type="entry name" value="ATP-dependent Clp protease ATP-binding subunit ClpX"/>
    <property type="match status" value="1"/>
</dbReference>
<dbReference type="Gene3D" id="1.10.8.60">
    <property type="match status" value="1"/>
</dbReference>
<dbReference type="Gene3D" id="6.20.220.10">
    <property type="entry name" value="ClpX chaperone, C4-type zinc finger domain"/>
    <property type="match status" value="1"/>
</dbReference>
<dbReference type="Gene3D" id="3.40.50.300">
    <property type="entry name" value="P-loop containing nucleotide triphosphate hydrolases"/>
    <property type="match status" value="1"/>
</dbReference>
<dbReference type="HAMAP" id="MF_00175">
    <property type="entry name" value="ClpX"/>
    <property type="match status" value="1"/>
</dbReference>
<dbReference type="InterPro" id="IPR003593">
    <property type="entry name" value="AAA+_ATPase"/>
</dbReference>
<dbReference type="InterPro" id="IPR050052">
    <property type="entry name" value="ATP-dep_Clp_protease_ClpX"/>
</dbReference>
<dbReference type="InterPro" id="IPR003959">
    <property type="entry name" value="ATPase_AAA_core"/>
</dbReference>
<dbReference type="InterPro" id="IPR019489">
    <property type="entry name" value="Clp_ATPase_C"/>
</dbReference>
<dbReference type="InterPro" id="IPR004487">
    <property type="entry name" value="Clp_protease_ATP-bd_su_ClpX"/>
</dbReference>
<dbReference type="InterPro" id="IPR046425">
    <property type="entry name" value="ClpX_bact"/>
</dbReference>
<dbReference type="InterPro" id="IPR027417">
    <property type="entry name" value="P-loop_NTPase"/>
</dbReference>
<dbReference type="InterPro" id="IPR025943">
    <property type="entry name" value="Sigma_54_int_dom_ATP-bd_2"/>
</dbReference>
<dbReference type="InterPro" id="IPR010603">
    <property type="entry name" value="Znf_CppX_C4"/>
</dbReference>
<dbReference type="InterPro" id="IPR038366">
    <property type="entry name" value="Znf_CppX_C4_sf"/>
</dbReference>
<dbReference type="NCBIfam" id="TIGR00382">
    <property type="entry name" value="clpX"/>
    <property type="match status" value="1"/>
</dbReference>
<dbReference type="NCBIfam" id="NF003745">
    <property type="entry name" value="PRK05342.1"/>
    <property type="match status" value="1"/>
</dbReference>
<dbReference type="PANTHER" id="PTHR48102:SF7">
    <property type="entry name" value="ATP-DEPENDENT CLP PROTEASE ATP-BINDING SUBUNIT CLPX-LIKE, MITOCHONDRIAL"/>
    <property type="match status" value="1"/>
</dbReference>
<dbReference type="PANTHER" id="PTHR48102">
    <property type="entry name" value="ATP-DEPENDENT CLP PROTEASE ATP-BINDING SUBUNIT CLPX-LIKE, MITOCHONDRIAL-RELATED"/>
    <property type="match status" value="1"/>
</dbReference>
<dbReference type="Pfam" id="PF07724">
    <property type="entry name" value="AAA_2"/>
    <property type="match status" value="1"/>
</dbReference>
<dbReference type="Pfam" id="PF10431">
    <property type="entry name" value="ClpB_D2-small"/>
    <property type="match status" value="1"/>
</dbReference>
<dbReference type="Pfam" id="PF06689">
    <property type="entry name" value="zf-C4_ClpX"/>
    <property type="match status" value="1"/>
</dbReference>
<dbReference type="SMART" id="SM00382">
    <property type="entry name" value="AAA"/>
    <property type="match status" value="1"/>
</dbReference>
<dbReference type="SMART" id="SM01086">
    <property type="entry name" value="ClpB_D2-small"/>
    <property type="match status" value="1"/>
</dbReference>
<dbReference type="SMART" id="SM00994">
    <property type="entry name" value="zf-C4_ClpX"/>
    <property type="match status" value="1"/>
</dbReference>
<dbReference type="SUPFAM" id="SSF52540">
    <property type="entry name" value="P-loop containing nucleoside triphosphate hydrolases"/>
    <property type="match status" value="1"/>
</dbReference>
<dbReference type="PROSITE" id="PS51902">
    <property type="entry name" value="CLPX_ZB"/>
    <property type="match status" value="1"/>
</dbReference>
<gene>
    <name evidence="1" type="primary">clpX</name>
    <name type="ordered locus">HH_1183</name>
</gene>
<accession>Q7VGY5</accession>
<comment type="function">
    <text evidence="1">ATP-dependent specificity component of the Clp protease. It directs the protease to specific substrates. Can perform chaperone functions in the absence of ClpP.</text>
</comment>
<comment type="subunit">
    <text evidence="1">Component of the ClpX-ClpP complex. Forms a hexameric ring that, in the presence of ATP, binds to fourteen ClpP subunits assembled into a disk-like structure with a central cavity, resembling the structure of eukaryotic proteasomes.</text>
</comment>
<comment type="similarity">
    <text evidence="1">Belongs to the ClpX chaperone family.</text>
</comment>